<keyword id="KW-0002">3D-structure</keyword>
<keyword id="KW-1003">Cell membrane</keyword>
<keyword id="KW-0966">Cell projection</keyword>
<keyword id="KW-0325">Glycoprotein</keyword>
<keyword id="KW-0407">Ion channel</keyword>
<keyword id="KW-0406">Ion transport</keyword>
<keyword id="KW-0472">Membrane</keyword>
<keyword id="KW-0597">Phosphoprotein</keyword>
<keyword id="KW-0630">Potassium</keyword>
<keyword id="KW-0631">Potassium channel</keyword>
<keyword id="KW-0633">Potassium transport</keyword>
<keyword id="KW-1185">Reference proteome</keyword>
<keyword id="KW-0812">Transmembrane</keyword>
<keyword id="KW-1133">Transmembrane helix</keyword>
<keyword id="KW-0813">Transport</keyword>
<keyword id="KW-0851">Voltage-gated channel</keyword>
<name>KCNA4_RAT</name>
<accession>P15385</accession>
<sequence length="655" mass="73390">MEVAMVSAESSGCNSHMPYGYAAQARARERERLAHSRAAAAAAVAAATAAVEGTGGSGGGPHHHHQTRGAYSSHDPQGSRGSREEEATRTEKKKKLHHRQSSFPHCSDLMPSGSEEKILRELSEEEEDEEEEEEEEEEGRFYYSEEDHGDGCSYTDLLPQDDGGGGGYSSVRYSDCCERVVINVSGLRFETQMKTLAQFPETLLGDPEKRTQYFDPLRNEYFFDRNRPSFDAILYYYQSGGRLKRPVNVPFDIFTEEVKFYQLGEEALLKFREDEGFVREEEDRALPENEFKKQIWLLFEYPESSSPARGIAIVSVLVILISIVIFCLETLPEFRDDRDLIMALSAGGHSRLLNDTSAPHLENSGHTIFNDPFFIVETVCIVWFSFEFVVRCFACPSQALFFKNIMNIIDIVSILPYFITLGTDLAQQQGGGNGQQQQAMSFAILRIIRLVRVFRIFKLSRHSKGLQILGHTLRASMRELGLLIFFLFIGVILFSSAVYFAEADEPTTHFQSIPDAFWWAVVTMTTVGYGDMKPITVGGKIVGSLCAIAGVLTIALPVPVIVSNFNYFYHRETENEEQTQLTQNAVSCPYLPSNLLKKFRSSTSSSLGDKSEYLEMEEGVKESLCGKEEKCQGKGDDSETDKNNCSNAKAVETDV</sequence>
<proteinExistence type="evidence at protein level"/>
<organism>
    <name type="scientific">Rattus norvegicus</name>
    <name type="common">Rat</name>
    <dbReference type="NCBI Taxonomy" id="10116"/>
    <lineage>
        <taxon>Eukaryota</taxon>
        <taxon>Metazoa</taxon>
        <taxon>Chordata</taxon>
        <taxon>Craniata</taxon>
        <taxon>Vertebrata</taxon>
        <taxon>Euteleostomi</taxon>
        <taxon>Mammalia</taxon>
        <taxon>Eutheria</taxon>
        <taxon>Euarchontoglires</taxon>
        <taxon>Glires</taxon>
        <taxon>Rodentia</taxon>
        <taxon>Myomorpha</taxon>
        <taxon>Muroidea</taxon>
        <taxon>Muridae</taxon>
        <taxon>Murinae</taxon>
        <taxon>Rattus</taxon>
    </lineage>
</organism>
<evidence type="ECO:0000250" key="1">
    <source>
        <dbReference type="UniProtKB" id="P22459"/>
    </source>
</evidence>
<evidence type="ECO:0000250" key="2">
    <source>
        <dbReference type="UniProtKB" id="P63142"/>
    </source>
</evidence>
<evidence type="ECO:0000255" key="3"/>
<evidence type="ECO:0000256" key="4">
    <source>
        <dbReference type="SAM" id="MobiDB-lite"/>
    </source>
</evidence>
<evidence type="ECO:0000269" key="5">
    <source>
    </source>
</evidence>
<evidence type="ECO:0000269" key="6">
    <source>
    </source>
</evidence>
<evidence type="ECO:0000269" key="7">
    <source>
    </source>
</evidence>
<evidence type="ECO:0000269" key="8">
    <source>
    </source>
</evidence>
<evidence type="ECO:0000269" key="9">
    <source>
    </source>
</evidence>
<evidence type="ECO:0000269" key="10">
    <source>
    </source>
</evidence>
<evidence type="ECO:0000269" key="11">
    <source>
    </source>
</evidence>
<evidence type="ECO:0000269" key="12">
    <source>
    </source>
</evidence>
<evidence type="ECO:0000269" key="13">
    <source>
    </source>
</evidence>
<evidence type="ECO:0000269" key="14">
    <source>
    </source>
</evidence>
<evidence type="ECO:0000269" key="15">
    <source>
    </source>
</evidence>
<evidence type="ECO:0000269" key="16">
    <source>
    </source>
</evidence>
<evidence type="ECO:0000303" key="17">
    <source>
    </source>
</evidence>
<evidence type="ECO:0000305" key="18"/>
<evidence type="ECO:0000305" key="19">
    <source>
    </source>
</evidence>
<evidence type="ECO:0007744" key="20">
    <source>
    </source>
</evidence>
<evidence type="ECO:0007829" key="21">
    <source>
        <dbReference type="PDB" id="1KN7"/>
    </source>
</evidence>
<protein>
    <recommendedName>
        <fullName>Potassium voltage-gated channel subfamily A member 4</fullName>
    </recommendedName>
    <alternativeName>
        <fullName evidence="17">RCK4</fullName>
    </alternativeName>
    <alternativeName>
        <fullName>RHK1</fullName>
    </alternativeName>
    <alternativeName>
        <fullName>RK3</fullName>
    </alternativeName>
    <alternativeName>
        <fullName>Voltage-gated potassium channel subunit Kv1.4</fullName>
    </alternativeName>
</protein>
<reference key="1">
    <citation type="journal article" date="1989" name="EMBO J.">
        <title>Molecular basis of functional diversity of voltage-gated potassium channels in mammalian brain.</title>
        <authorList>
            <person name="Stuehmer W."/>
            <person name="Ruppersberg J.P."/>
            <person name="Schroerter K.H."/>
            <person name="Sakmann B."/>
            <person name="Stocker M."/>
            <person name="Giese K.P."/>
            <person name="Perschke A."/>
            <person name="Baumann A."/>
            <person name="Pongs O."/>
        </authorList>
    </citation>
    <scope>NUCLEOTIDE SEQUENCE [MRNA]</scope>
    <scope>FUNCTION</scope>
    <scope>TRANSPORTER ACTIVITY</scope>
    <source>
        <tissue>Brain</tissue>
    </source>
</reference>
<reference key="2">
    <citation type="journal article" date="1990" name="FEBS Lett.">
        <title>Molecular cloning and functional expression of a potassium channel cDNA isolated from a rat cardiac library.</title>
        <authorList>
            <person name="Tseng-Crank J."/>
            <person name="Tseng G.-N."/>
            <person name="Schwartz A."/>
            <person name="Tanouye M.A."/>
        </authorList>
    </citation>
    <scope>NUCLEOTIDE SEQUENCE [MRNA]</scope>
    <scope>FUNCTION</scope>
    <scope>SUBCELLULAR LOCATION</scope>
    <scope>TRANSPORTER ACTIVITY</scope>
    <source>
        <strain>Sprague-Dawley</strain>
        <tissue>Heart</tissue>
    </source>
</reference>
<reference key="3">
    <citation type="journal article" date="1990" name="Nature">
        <title>Heteromultimeric channels formed by rat brain potassium-channel proteins.</title>
        <authorList>
            <person name="Ruppersberg J.P."/>
            <person name="Schroeter K.H."/>
            <person name="Sakmann B."/>
            <person name="Stocker M."/>
            <person name="Sewing S."/>
            <person name="Pongs O."/>
        </authorList>
    </citation>
    <scope>FUNCTION</scope>
    <scope>SUBCELLULAR LOCATION</scope>
    <scope>INTERACTION WITH KCNA1</scope>
    <scope>TRANSPORTER ACTIVITY</scope>
</reference>
<reference key="4">
    <citation type="journal article" date="1992" name="Neuron">
        <title>Subcellular segregation of two A-type K+ channel proteins in rat central neurons.</title>
        <authorList>
            <person name="Sheng M."/>
            <person name="Tsaur M.L."/>
            <person name="Jan Y.N."/>
            <person name="Jan L.Y."/>
        </authorList>
    </citation>
    <scope>SUBCELLULAR LOCATION</scope>
</reference>
<reference key="5">
    <citation type="journal article" date="1993" name="Circ. Res.">
        <title>Heteromultimeric assembly of human potassium channels. Molecular basis of a transient outward current?</title>
        <authorList>
            <person name="Po S."/>
            <person name="Roberds S."/>
            <person name="Snyders D.J."/>
            <person name="Tamkun M.M."/>
            <person name="Bennett P.B."/>
        </authorList>
    </citation>
    <scope>FUNCTION</scope>
</reference>
<reference key="6">
    <citation type="journal article" date="1993" name="Nature">
        <title>Presynaptic A-current based on heteromultimeric K+ channels detected in vivo.</title>
        <authorList>
            <person name="Sheng M."/>
            <person name="Liao Y.J."/>
            <person name="Jan Y.N."/>
            <person name="Jan L.Y."/>
        </authorList>
    </citation>
    <scope>INTERACTION WITH KCNA2</scope>
    <scope>FUNCTION</scope>
    <scope>SUBCELLULAR LOCATION</scope>
    <scope>TISSUE SPECIFICITY</scope>
</reference>
<reference key="7">
    <citation type="journal article" date="1995" name="Nature">
        <title>Clustering of Shaker-type K+ channels by interaction with a family of membrane-associated guanylate kinases.</title>
        <authorList>
            <person name="Kim E."/>
            <person name="Niethammer M."/>
            <person name="Rothschild A."/>
            <person name="Jan Y.N."/>
            <person name="Sheng M."/>
        </authorList>
    </citation>
    <scope>INTERACTION WITH DLG1; DLG2 AND DLG4</scope>
    <scope>PDZ-BINDING MOTIF</scope>
</reference>
<reference key="8">
    <citation type="journal article" date="1997" name="J. Neurosci.">
        <title>Association and colocalization of the Kvbeta1 and Kvbeta2 beta-subunits with Kv1 alpha-subunits in mammalian brain K+ channel complexes.</title>
        <authorList>
            <person name="Rhodes K.J."/>
            <person name="Strassle B.W."/>
            <person name="Monaghan M.M."/>
            <person name="Bekele-Arcuri Z."/>
            <person name="Matos M.F."/>
            <person name="Trimmer J.S."/>
        </authorList>
    </citation>
    <scope>INTERACTION WITH KCNAB1 AND KCNAB2</scope>
    <scope>TISSUE SPECIFICITY</scope>
</reference>
<reference key="9">
    <citation type="journal article" date="2000" name="J. Biol. Chem.">
        <title>Subunit composition determines Kv1 potassium channel surface expression.</title>
        <authorList>
            <person name="Manganas L.N."/>
            <person name="Trimmer J.S."/>
        </authorList>
    </citation>
    <scope>INTERACTION WITH KCNA1 AND KCNA2</scope>
    <scope>SUBCELLULAR LOCATION</scope>
    <scope>GLYCOSYLATION</scope>
</reference>
<reference key="10">
    <citation type="journal article" date="2002" name="Neuron">
        <title>The sigma receptor as a ligand-regulated auxiliary potassium channel subunit.</title>
        <authorList>
            <person name="Aydar E."/>
            <person name="Palmer C.P."/>
            <person name="Klyachko V.A."/>
            <person name="Jackson M.B."/>
        </authorList>
    </citation>
    <scope>INTERACTION WITH SIGMAR1</scope>
</reference>
<reference key="11">
    <citation type="journal article" date="2003" name="Pflugers Arch.">
        <title>Kv channel subunits that contribute to voltage-gated K+ current in renal vascular smooth muscle.</title>
        <authorList>
            <person name="Fergus D.J."/>
            <person name="Martens J.R."/>
            <person name="England S.K."/>
        </authorList>
    </citation>
    <scope>SUBUNIT</scope>
    <scope>INTERACTION WITH KCNA2</scope>
</reference>
<reference key="12">
    <citation type="journal article" date="2006" name="Neuron">
        <title>The epilepsy-linked Lgi1 protein assembles into presynaptic Kv1 channels and inhibits inactivation by Kvbeta1.</title>
        <authorList>
            <person name="Schulte U."/>
            <person name="Thumfart J.-O."/>
            <person name="Kloecker N."/>
            <person name="Sailer C.A."/>
            <person name="Bildl W."/>
            <person name="Biniossek M."/>
            <person name="Dehn D."/>
            <person name="Deller T."/>
            <person name="Eble S."/>
            <person name="Abbass K."/>
            <person name="Wangler T."/>
            <person name="Knaus H.-G."/>
            <person name="Fakler B."/>
        </authorList>
    </citation>
    <scope>INTERACTION WITH LGI1; KCNA1 AND KCNAB1</scope>
</reference>
<reference key="13">
    <citation type="journal article" date="2012" name="Nat. Commun.">
        <title>Quantitative maps of protein phosphorylation sites across 14 different rat organs and tissues.</title>
        <authorList>
            <person name="Lundby A."/>
            <person name="Secher A."/>
            <person name="Lage K."/>
            <person name="Nordsborg N.B."/>
            <person name="Dmytriyev A."/>
            <person name="Lundby C."/>
            <person name="Olsen J.V."/>
        </authorList>
    </citation>
    <scope>PHOSPHORYLATION [LARGE SCALE ANALYSIS] AT SER-123</scope>
    <scope>IDENTIFICATION BY MASS SPECTROMETRY [LARGE SCALE ANALYSIS]</scope>
</reference>
<reference key="14">
    <citation type="journal article" date="1997" name="Nature">
        <title>NMR structure of inactivation gates from mammalian voltage-dependent potassium channels.</title>
        <authorList>
            <person name="Antz C."/>
            <person name="Geyer M."/>
            <person name="Fakler B."/>
            <person name="Schott M.K."/>
            <person name="Guy H.R."/>
            <person name="Frank R."/>
            <person name="Ruppersberg J.P."/>
            <person name="Kalbitzer H.R."/>
        </authorList>
    </citation>
    <scope>STRUCTURE BY NMR OF 1-37</scope>
</reference>
<reference key="15">
    <citation type="journal article" date="2003" name="J. Biol. Chem.">
        <title>Solution structure and function of the 'tandem inactivation domain' of the neuronal A-type potassium channel Kv1.4.</title>
        <authorList>
            <person name="Wissmann R."/>
            <person name="Bildl W."/>
            <person name="Oliver D."/>
            <person name="Beyermann M."/>
            <person name="Kalbitzer H.-R."/>
            <person name="Bentrop D."/>
            <person name="Fakler B."/>
        </authorList>
    </citation>
    <scope>STRUCTURE BY NMR OF 25-75</scope>
</reference>
<feature type="chain" id="PRO_0000053984" description="Potassium voltage-gated channel subfamily A member 4">
    <location>
        <begin position="1"/>
        <end position="655"/>
    </location>
</feature>
<feature type="topological domain" description="Cytoplasmic" evidence="2">
    <location>
        <begin position="1"/>
        <end position="306"/>
    </location>
</feature>
<feature type="transmembrane region" description="Helical; Name=Segment S1" evidence="2">
    <location>
        <begin position="307"/>
        <end position="328"/>
    </location>
</feature>
<feature type="topological domain" description="Extracellular" evidence="2">
    <location>
        <begin position="329"/>
        <end position="372"/>
    </location>
</feature>
<feature type="transmembrane region" description="Helical; Name=Segment S2" evidence="2">
    <location>
        <begin position="373"/>
        <end position="394"/>
    </location>
</feature>
<feature type="topological domain" description="Cytoplasmic" evidence="2">
    <location>
        <begin position="395"/>
        <end position="405"/>
    </location>
</feature>
<feature type="transmembrane region" description="Helical; Name=Segment S3" evidence="2">
    <location>
        <begin position="406"/>
        <end position="426"/>
    </location>
</feature>
<feature type="topological domain" description="Extracellular" evidence="2">
    <location>
        <begin position="427"/>
        <end position="441"/>
    </location>
</feature>
<feature type="transmembrane region" description="Helical; Voltage-sensor; Name=Segment S4" evidence="2">
    <location>
        <begin position="442"/>
        <end position="462"/>
    </location>
</feature>
<feature type="topological domain" description="Cytoplasmic" evidence="2">
    <location>
        <begin position="463"/>
        <end position="477"/>
    </location>
</feature>
<feature type="transmembrane region" description="Helical; Name=Segment S5" evidence="2">
    <location>
        <begin position="478"/>
        <end position="499"/>
    </location>
</feature>
<feature type="topological domain" description="Extracellular" evidence="2">
    <location>
        <begin position="500"/>
        <end position="513"/>
    </location>
</feature>
<feature type="intramembrane region" description="Helical; Name=Pore helix" evidence="2">
    <location>
        <begin position="514"/>
        <end position="525"/>
    </location>
</feature>
<feature type="intramembrane region" evidence="2">
    <location>
        <begin position="526"/>
        <end position="533"/>
    </location>
</feature>
<feature type="topological domain" description="Extracellular" evidence="2">
    <location>
        <begin position="534"/>
        <end position="540"/>
    </location>
</feature>
<feature type="transmembrane region" description="Helical; Name=Segment S6" evidence="2">
    <location>
        <begin position="541"/>
        <end position="569"/>
    </location>
</feature>
<feature type="topological domain" description="Cytoplasmic" evidence="2">
    <location>
        <begin position="570"/>
        <end position="655"/>
    </location>
</feature>
<feature type="region of interest" description="Disordered" evidence="4">
    <location>
        <begin position="24"/>
        <end position="153"/>
    </location>
</feature>
<feature type="region of interest" description="S4-S5 linker" evidence="2">
    <location>
        <begin position="464"/>
        <end position="477"/>
    </location>
</feature>
<feature type="region of interest" description="Disordered" evidence="4">
    <location>
        <begin position="631"/>
        <end position="655"/>
    </location>
</feature>
<feature type="short sequence motif" description="Selectivity filter" evidence="2">
    <location>
        <begin position="526"/>
        <end position="531"/>
    </location>
</feature>
<feature type="short sequence motif" description="PDZ-binding" evidence="13">
    <location>
        <begin position="653"/>
        <end position="655"/>
    </location>
</feature>
<feature type="compositionally biased region" description="Low complexity" evidence="4">
    <location>
        <begin position="36"/>
        <end position="50"/>
    </location>
</feature>
<feature type="compositionally biased region" description="Basic and acidic residues" evidence="4">
    <location>
        <begin position="81"/>
        <end position="90"/>
    </location>
</feature>
<feature type="compositionally biased region" description="Basic residues" evidence="4">
    <location>
        <begin position="91"/>
        <end position="100"/>
    </location>
</feature>
<feature type="compositionally biased region" description="Acidic residues" evidence="4">
    <location>
        <begin position="123"/>
        <end position="138"/>
    </location>
</feature>
<feature type="compositionally biased region" description="Basic and acidic residues" evidence="4">
    <location>
        <begin position="139"/>
        <end position="150"/>
    </location>
</feature>
<feature type="compositionally biased region" description="Basic and acidic residues" evidence="4">
    <location>
        <begin position="631"/>
        <end position="642"/>
    </location>
</feature>
<feature type="modified residue" description="Phosphoserine" evidence="20">
    <location>
        <position position="123"/>
    </location>
</feature>
<feature type="modified residue" description="Phosphoserine; by PKA" evidence="3">
    <location>
        <position position="601"/>
    </location>
</feature>
<feature type="glycosylation site" description="N-linked (GlcNAc...) asparagine" evidence="3">
    <location>
        <position position="354"/>
    </location>
</feature>
<feature type="sequence conflict" description="In Ref. 2; AAA41469." evidence="18" ref="2">
    <original>A</original>
    <variation>L</variation>
    <location>
        <position position="42"/>
    </location>
</feature>
<feature type="sequence conflict" description="In Ref. 2; AAA41469." evidence="18" ref="2">
    <original>EEEAT</original>
    <variation>RRRRQ</variation>
    <location>
        <begin position="84"/>
        <end position="88"/>
    </location>
</feature>
<feature type="sequence conflict" description="In Ref. 2; AAA41469." evidence="18" ref="2">
    <location>
        <position position="95"/>
    </location>
</feature>
<feature type="sequence conflict" description="In Ref. 2; AAA41469." evidence="18" ref="2">
    <original>G</original>
    <variation>A</variation>
    <location>
        <position position="310"/>
    </location>
</feature>
<feature type="turn" evidence="21">
    <location>
        <begin position="11"/>
        <end position="13"/>
    </location>
</feature>
<feature type="helix" evidence="21">
    <location>
        <begin position="21"/>
        <end position="24"/>
    </location>
</feature>
<feature type="helix" evidence="21">
    <location>
        <begin position="25"/>
        <end position="30"/>
    </location>
</feature>
<feature type="helix" evidence="21">
    <location>
        <begin position="31"/>
        <end position="33"/>
    </location>
</feature>
<feature type="helix" evidence="21">
    <location>
        <begin position="43"/>
        <end position="46"/>
    </location>
</feature>
<dbReference type="EMBL" id="X16002">
    <property type="protein sequence ID" value="CAA34133.1"/>
    <property type="molecule type" value="mRNA"/>
</dbReference>
<dbReference type="EMBL" id="M32867">
    <property type="protein sequence ID" value="AAA41469.1"/>
    <property type="molecule type" value="mRNA"/>
</dbReference>
<dbReference type="PIR" id="S11049">
    <property type="entry name" value="S11049"/>
</dbReference>
<dbReference type="RefSeq" id="NP_037103.1">
    <property type="nucleotide sequence ID" value="NM_012971.2"/>
</dbReference>
<dbReference type="PDB" id="1KN7">
    <property type="method" value="NMR"/>
    <property type="chains" value="A=1-75"/>
</dbReference>
<dbReference type="PDB" id="1ZTO">
    <property type="method" value="NMR"/>
    <property type="chains" value="A=1-36"/>
</dbReference>
<dbReference type="PDBsum" id="1KN7"/>
<dbReference type="PDBsum" id="1ZTO"/>
<dbReference type="BMRB" id="P15385"/>
<dbReference type="SMR" id="P15385"/>
<dbReference type="BioGRID" id="247502">
    <property type="interactions" value="2"/>
</dbReference>
<dbReference type="CORUM" id="P15385"/>
<dbReference type="FunCoup" id="P15385">
    <property type="interactions" value="1729"/>
</dbReference>
<dbReference type="IntAct" id="P15385">
    <property type="interactions" value="5"/>
</dbReference>
<dbReference type="MINT" id="P15385"/>
<dbReference type="STRING" id="10116.ENSRNOP00000006524"/>
<dbReference type="BindingDB" id="P15385"/>
<dbReference type="ChEMBL" id="CHEMBL5583"/>
<dbReference type="DrugCentral" id="P15385"/>
<dbReference type="GuidetoPHARMACOLOGY" id="541"/>
<dbReference type="GlyCosmos" id="P15385">
    <property type="glycosylation" value="1 site, No reported glycans"/>
</dbReference>
<dbReference type="GlyGen" id="P15385">
    <property type="glycosylation" value="1 site"/>
</dbReference>
<dbReference type="iPTMnet" id="P15385"/>
<dbReference type="PhosphoSitePlus" id="P15385"/>
<dbReference type="PaxDb" id="10116-ENSRNOP00000006524"/>
<dbReference type="ABCD" id="P15385">
    <property type="antibodies" value="2 sequenced antibodies"/>
</dbReference>
<dbReference type="GeneID" id="25469"/>
<dbReference type="KEGG" id="rno:25469"/>
<dbReference type="UCSC" id="RGD:2952">
    <property type="organism name" value="rat"/>
</dbReference>
<dbReference type="AGR" id="RGD:2952"/>
<dbReference type="CTD" id="3739"/>
<dbReference type="RGD" id="2952">
    <property type="gene designation" value="Kcna4"/>
</dbReference>
<dbReference type="eggNOG" id="KOG1545">
    <property type="taxonomic scope" value="Eukaryota"/>
</dbReference>
<dbReference type="InParanoid" id="P15385"/>
<dbReference type="OrthoDB" id="415460at2759"/>
<dbReference type="PhylomeDB" id="P15385"/>
<dbReference type="Reactome" id="R-RNO-1296072">
    <property type="pathway name" value="Voltage gated Potassium channels"/>
</dbReference>
<dbReference type="EvolutionaryTrace" id="P15385"/>
<dbReference type="PRO" id="PR:P15385"/>
<dbReference type="Proteomes" id="UP000002494">
    <property type="component" value="Unplaced"/>
</dbReference>
<dbReference type="GO" id="GO:0032279">
    <property type="term" value="C:asymmetric synapse"/>
    <property type="evidence" value="ECO:0000314"/>
    <property type="project" value="SynGO-UCL"/>
</dbReference>
<dbReference type="GO" id="GO:0030424">
    <property type="term" value="C:axon"/>
    <property type="evidence" value="ECO:0000314"/>
    <property type="project" value="UniProtKB"/>
</dbReference>
<dbReference type="GO" id="GO:0043194">
    <property type="term" value="C:axon initial segment"/>
    <property type="evidence" value="ECO:0000266"/>
    <property type="project" value="RGD"/>
</dbReference>
<dbReference type="GO" id="GO:0009986">
    <property type="term" value="C:cell surface"/>
    <property type="evidence" value="ECO:0000314"/>
    <property type="project" value="RGD"/>
</dbReference>
<dbReference type="GO" id="GO:0043198">
    <property type="term" value="C:dendritic shaft"/>
    <property type="evidence" value="ECO:0000314"/>
    <property type="project" value="SynGO-UCL"/>
</dbReference>
<dbReference type="GO" id="GO:0043197">
    <property type="term" value="C:dendritic spine"/>
    <property type="evidence" value="ECO:0000314"/>
    <property type="project" value="SynGO-UCL"/>
</dbReference>
<dbReference type="GO" id="GO:0098978">
    <property type="term" value="C:glutamatergic synapse"/>
    <property type="evidence" value="ECO:0000314"/>
    <property type="project" value="SynGO"/>
</dbReference>
<dbReference type="GO" id="GO:0016020">
    <property type="term" value="C:membrane"/>
    <property type="evidence" value="ECO:0000314"/>
    <property type="project" value="UniProtKB"/>
</dbReference>
<dbReference type="GO" id="GO:0005886">
    <property type="term" value="C:plasma membrane"/>
    <property type="evidence" value="ECO:0000315"/>
    <property type="project" value="UniProtKB"/>
</dbReference>
<dbReference type="GO" id="GO:0045211">
    <property type="term" value="C:postsynaptic membrane"/>
    <property type="evidence" value="ECO:0000314"/>
    <property type="project" value="SynGO-UCL"/>
</dbReference>
<dbReference type="GO" id="GO:0042734">
    <property type="term" value="C:presynaptic membrane"/>
    <property type="evidence" value="ECO:0000314"/>
    <property type="project" value="SynGO-UCL"/>
</dbReference>
<dbReference type="GO" id="GO:0008076">
    <property type="term" value="C:voltage-gated potassium channel complex"/>
    <property type="evidence" value="ECO:0000314"/>
    <property type="project" value="UniProtKB"/>
</dbReference>
<dbReference type="GO" id="GO:0005251">
    <property type="term" value="F:delayed rectifier potassium channel activity"/>
    <property type="evidence" value="ECO:0000318"/>
    <property type="project" value="GO_Central"/>
</dbReference>
<dbReference type="GO" id="GO:0005216">
    <property type="term" value="F:monoatomic ion channel activity"/>
    <property type="evidence" value="ECO:0000314"/>
    <property type="project" value="RGD"/>
</dbReference>
<dbReference type="GO" id="GO:0005267">
    <property type="term" value="F:potassium channel activity"/>
    <property type="evidence" value="ECO:0000314"/>
    <property type="project" value="RGD"/>
</dbReference>
<dbReference type="GO" id="GO:0030955">
    <property type="term" value="F:potassium ion binding"/>
    <property type="evidence" value="ECO:0007669"/>
    <property type="project" value="InterPro"/>
</dbReference>
<dbReference type="GO" id="GO:0099508">
    <property type="term" value="F:voltage-gated monoatomic ion channel activity involved in regulation of presynaptic membrane potential"/>
    <property type="evidence" value="ECO:0000266"/>
    <property type="project" value="RGD"/>
</dbReference>
<dbReference type="GO" id="GO:0005249">
    <property type="term" value="F:voltage-gated potassium channel activity"/>
    <property type="evidence" value="ECO:0000314"/>
    <property type="project" value="RGD"/>
</dbReference>
<dbReference type="GO" id="GO:0001508">
    <property type="term" value="P:action potential"/>
    <property type="evidence" value="ECO:0000318"/>
    <property type="project" value="GO_Central"/>
</dbReference>
<dbReference type="GO" id="GO:0071805">
    <property type="term" value="P:potassium ion transmembrane transport"/>
    <property type="evidence" value="ECO:0000315"/>
    <property type="project" value="UniProtKB"/>
</dbReference>
<dbReference type="GO" id="GO:0006813">
    <property type="term" value="P:potassium ion transport"/>
    <property type="evidence" value="ECO:0000304"/>
    <property type="project" value="RGD"/>
</dbReference>
<dbReference type="GO" id="GO:0051260">
    <property type="term" value="P:protein homooligomerization"/>
    <property type="evidence" value="ECO:0007669"/>
    <property type="project" value="InterPro"/>
</dbReference>
<dbReference type="FunFam" id="1.10.287.70:FF:000002">
    <property type="entry name" value="Potassium voltage-gated channel subfamily a member"/>
    <property type="match status" value="1"/>
</dbReference>
<dbReference type="FunFam" id="1.20.120.350:FF:000028">
    <property type="entry name" value="Potassium voltage-gated channel subfamily a member"/>
    <property type="match status" value="1"/>
</dbReference>
<dbReference type="FunFam" id="1.20.5.600:FF:000001">
    <property type="entry name" value="Potassium voltage-gated channel subfamily A member 4"/>
    <property type="match status" value="1"/>
</dbReference>
<dbReference type="FunFam" id="3.30.710.10:FF:000119">
    <property type="entry name" value="potassium voltage-gated channel subfamily A member 4"/>
    <property type="match status" value="1"/>
</dbReference>
<dbReference type="Gene3D" id="1.10.287.70">
    <property type="match status" value="1"/>
</dbReference>
<dbReference type="Gene3D" id="3.30.710.10">
    <property type="entry name" value="Potassium Channel Kv1.1, Chain A"/>
    <property type="match status" value="1"/>
</dbReference>
<dbReference type="Gene3D" id="1.20.5.600">
    <property type="entry name" value="Potassium channel, voltage dependent, Kv1.4, tandem inactivation domain"/>
    <property type="match status" value="1"/>
</dbReference>
<dbReference type="Gene3D" id="1.20.120.350">
    <property type="entry name" value="Voltage-gated potassium channels. Chain C"/>
    <property type="match status" value="1"/>
</dbReference>
<dbReference type="InterPro" id="IPR000210">
    <property type="entry name" value="BTB/POZ_dom"/>
</dbReference>
<dbReference type="InterPro" id="IPR005821">
    <property type="entry name" value="Ion_trans_dom"/>
</dbReference>
<dbReference type="InterPro" id="IPR003968">
    <property type="entry name" value="K_chnl_volt-dep_Kv"/>
</dbReference>
<dbReference type="InterPro" id="IPR003972">
    <property type="entry name" value="K_chnl_volt-dep_Kv1"/>
</dbReference>
<dbReference type="InterPro" id="IPR020467">
    <property type="entry name" value="K_chnl_volt-dep_Kv1.4"/>
</dbReference>
<dbReference type="InterPro" id="IPR012897">
    <property type="entry name" value="K_chnl_volt-dep_Kv1.4_TID"/>
</dbReference>
<dbReference type="InterPro" id="IPR037065">
    <property type="entry name" value="K_chnl_volt-dep_Kv1.4_TID_sf"/>
</dbReference>
<dbReference type="InterPro" id="IPR011333">
    <property type="entry name" value="SKP1/BTB/POZ_sf"/>
</dbReference>
<dbReference type="InterPro" id="IPR003131">
    <property type="entry name" value="T1-type_BTB"/>
</dbReference>
<dbReference type="InterPro" id="IPR028325">
    <property type="entry name" value="VG_K_chnl"/>
</dbReference>
<dbReference type="InterPro" id="IPR027359">
    <property type="entry name" value="Volt_channel_dom_sf"/>
</dbReference>
<dbReference type="PANTHER" id="PTHR11537:SF284">
    <property type="entry name" value="POTASSIUM VOLTAGE-GATED CHANNEL SUBFAMILY A MEMBER 4"/>
    <property type="match status" value="1"/>
</dbReference>
<dbReference type="PANTHER" id="PTHR11537">
    <property type="entry name" value="VOLTAGE-GATED POTASSIUM CHANNEL"/>
    <property type="match status" value="1"/>
</dbReference>
<dbReference type="Pfam" id="PF02214">
    <property type="entry name" value="BTB_2"/>
    <property type="match status" value="1"/>
</dbReference>
<dbReference type="Pfam" id="PF00520">
    <property type="entry name" value="Ion_trans"/>
    <property type="match status" value="1"/>
</dbReference>
<dbReference type="Pfam" id="PF07941">
    <property type="entry name" value="K_channel_TID"/>
    <property type="match status" value="1"/>
</dbReference>
<dbReference type="PRINTS" id="PR00169">
    <property type="entry name" value="KCHANNEL"/>
</dbReference>
<dbReference type="PRINTS" id="PR01511">
    <property type="entry name" value="KV14CHANNEL"/>
</dbReference>
<dbReference type="PRINTS" id="PR01491">
    <property type="entry name" value="KVCHANNEL"/>
</dbReference>
<dbReference type="PRINTS" id="PR01496">
    <property type="entry name" value="SHAKERCHANEL"/>
</dbReference>
<dbReference type="SMART" id="SM00225">
    <property type="entry name" value="BTB"/>
    <property type="match status" value="1"/>
</dbReference>
<dbReference type="SUPFAM" id="SSF54695">
    <property type="entry name" value="POZ domain"/>
    <property type="match status" value="1"/>
</dbReference>
<dbReference type="SUPFAM" id="SSF81324">
    <property type="entry name" value="Voltage-gated potassium channels"/>
    <property type="match status" value="1"/>
</dbReference>
<gene>
    <name type="primary">Kcna4</name>
</gene>
<comment type="function">
    <text evidence="5 10 11 12 15">Voltage-gated potassium channel that mediates transmembrane potassium transport in excitable membranes. Forms tetrameric potassium-selective channels through which potassium ions pass in accordance with their electrochemical gradient. The channel alternates between opened and closed conformations in response to the voltage difference across the membrane. Can form functional homotetrameric channels and heterotetrameric channels that contain variable proportions of KCNA1, KCNA2, KCNA4, KCNA5, and possibly other family members as well; channel properties depend on the type of alpha subunits that are part of the channel (PubMed:10896669, PubMed:2348860, PubMed:8495559). Channel properties are modulated by cytoplasmic beta subunits that regulate the subcellular location of the alpha subunits and promote rapid inactivation. In vivo, membranes probably contain a mixture of heteromeric potassium channel complexes, making it difficult to assign currents observed in intact tissues to any particular potassium channel family member. Homotetrameric KCNA4 forms a potassium channel that opens in response to membrane depolarization, followed by rapid spontaneous channel closure (PubMed:2384173). Likewise, a heterotetrameric channel formed by KCNA1 and KCNA4 shows rapid inactivation (PubMed:2348860).</text>
</comment>
<comment type="catalytic activity">
    <reaction evidence="10 11 12">
        <text>K(+)(in) = K(+)(out)</text>
        <dbReference type="Rhea" id="RHEA:29463"/>
        <dbReference type="ChEBI" id="CHEBI:29103"/>
    </reaction>
</comment>
<comment type="subunit">
    <text evidence="1 5 6 7 9 10 13 14 16">Homotetramer and heterotetramer of potassium channel proteins (PubMed:10896669). Interacts with KCNAB1 and KCNAB2 (PubMed:9334400). Interacts with DLG1, DLG2 and DLG4 via their PDZ domains (PubMed:7477295). Interacts with SIGMAR1 (PubMed:11988171). Part of a complex containing KCNA1, KCNAB1 and LGI1 (PubMed:16504945). Detected in a complex with KCNA1 (PubMed:10896669, PubMed:2348860). Interacts with KCNA2 (PubMed:10896669, PubMed:12632190, PubMed:8361540). Interacts (via cytoplasmic N-terminal domain) with KCNRG (By similarity).</text>
</comment>
<comment type="interaction">
    <interactant intactId="EBI-631417">
        <id>P15385</id>
    </interactant>
    <interactant intactId="EBI-80389">
        <id>P78352</id>
        <label>DLG4</label>
    </interactant>
    <organismsDiffer>true</organismsDiffer>
    <experiments>9</experiments>
</comment>
<comment type="subcellular location">
    <subcellularLocation>
        <location evidence="5 10 11">Cell membrane</location>
        <topology evidence="3">Multi-pass membrane protein</topology>
    </subcellularLocation>
    <subcellularLocation>
        <location evidence="5 8 19">Cell projection</location>
        <location evidence="5 8 19">Axon</location>
    </subcellularLocation>
</comment>
<comment type="tissue specificity">
    <text evidence="11 14 16">Detected in brain (at protein level) (PubMed:8361540, PubMed:9334400). Heart and brain.</text>
</comment>
<comment type="domain">
    <text evidence="18">The N-terminus may be important in determining the rate of inactivation of the channel while the tail may play a role in modulation of channel activity and/or targeting of the channel to specific subcellular compartments.</text>
</comment>
<comment type="domain">
    <text evidence="2">The transmembrane segment S4 functions as a voltage-sensor and is characterized by a series of positively charged amino acids at every third position. Channel opening and closing is effected by a conformation change that affects the position and orientation of the voltage-sensor paddle formed by S3 and S4 within the membrane. A transmembrane electric field that is positive inside would push the positively charged S4 segment outwards, thereby opening the pore, while a field that is negative inside would pull the S4 segment inwards and close the pore. Changes in the position and orientation of S4 are then transmitted to the activation gate formed by the inner helix bundle via the S4-S5 linker region.</text>
</comment>
<comment type="PTM">
    <text evidence="5">N-glycosylated.</text>
</comment>
<comment type="similarity">
    <text evidence="18">Belongs to the potassium channel family. A (Shaker) (TC 1.A.1.2) subfamily. Kv1.4/KCNA4 sub-subfamily.</text>
</comment>